<feature type="chain" id="PRO_1000063943" description="2,3-bisphosphoglycerate-independent phosphoglycerate mutase">
    <location>
        <begin position="1"/>
        <end position="496"/>
    </location>
</feature>
<feature type="active site" description="Phosphoserine intermediate" evidence="1">
    <location>
        <position position="62"/>
    </location>
</feature>
<feature type="binding site" evidence="1">
    <location>
        <position position="12"/>
    </location>
    <ligand>
        <name>Mn(2+)</name>
        <dbReference type="ChEBI" id="CHEBI:29035"/>
        <label>2</label>
    </ligand>
</feature>
<feature type="binding site" evidence="1">
    <location>
        <position position="62"/>
    </location>
    <ligand>
        <name>Mn(2+)</name>
        <dbReference type="ChEBI" id="CHEBI:29035"/>
        <label>2</label>
    </ligand>
</feature>
<feature type="binding site" evidence="1">
    <location>
        <position position="121"/>
    </location>
    <ligand>
        <name>substrate</name>
    </ligand>
</feature>
<feature type="binding site" evidence="1">
    <location>
        <begin position="150"/>
        <end position="151"/>
    </location>
    <ligand>
        <name>substrate</name>
    </ligand>
</feature>
<feature type="binding site" evidence="1">
    <location>
        <position position="181"/>
    </location>
    <ligand>
        <name>substrate</name>
    </ligand>
</feature>
<feature type="binding site" evidence="1">
    <location>
        <position position="187"/>
    </location>
    <ligand>
        <name>substrate</name>
    </ligand>
</feature>
<feature type="binding site" evidence="1">
    <location>
        <begin position="252"/>
        <end position="255"/>
    </location>
    <ligand>
        <name>substrate</name>
    </ligand>
</feature>
<feature type="binding site" evidence="1">
    <location>
        <position position="317"/>
    </location>
    <ligand>
        <name>substrate</name>
    </ligand>
</feature>
<feature type="binding site" evidence="1">
    <location>
        <position position="384"/>
    </location>
    <ligand>
        <name>Mn(2+)</name>
        <dbReference type="ChEBI" id="CHEBI:29035"/>
        <label>1</label>
    </ligand>
</feature>
<feature type="binding site" evidence="1">
    <location>
        <position position="388"/>
    </location>
    <ligand>
        <name>Mn(2+)</name>
        <dbReference type="ChEBI" id="CHEBI:29035"/>
        <label>1</label>
    </ligand>
</feature>
<feature type="binding site" evidence="1">
    <location>
        <position position="425"/>
    </location>
    <ligand>
        <name>Mn(2+)</name>
        <dbReference type="ChEBI" id="CHEBI:29035"/>
        <label>2</label>
    </ligand>
</feature>
<feature type="binding site" evidence="1">
    <location>
        <position position="426"/>
    </location>
    <ligand>
        <name>Mn(2+)</name>
        <dbReference type="ChEBI" id="CHEBI:29035"/>
        <label>2</label>
    </ligand>
</feature>
<feature type="binding site" evidence="1">
    <location>
        <position position="444"/>
    </location>
    <ligand>
        <name>Mn(2+)</name>
        <dbReference type="ChEBI" id="CHEBI:29035"/>
        <label>1</label>
    </ligand>
</feature>
<evidence type="ECO:0000255" key="1">
    <source>
        <dbReference type="HAMAP-Rule" id="MF_01038"/>
    </source>
</evidence>
<dbReference type="EC" id="5.4.2.12" evidence="1"/>
<dbReference type="EMBL" id="CP000235">
    <property type="protein sequence ID" value="ABD43452.1"/>
    <property type="molecule type" value="Genomic_DNA"/>
</dbReference>
<dbReference type="RefSeq" id="WP_011450517.1">
    <property type="nucleotide sequence ID" value="NC_007797.1"/>
</dbReference>
<dbReference type="SMR" id="Q2GKV7"/>
<dbReference type="STRING" id="212042.APH_0389"/>
<dbReference type="PaxDb" id="212042-APH_0389"/>
<dbReference type="EnsemblBacteria" id="ABD43452">
    <property type="protein sequence ID" value="ABD43452"/>
    <property type="gene ID" value="APH_0389"/>
</dbReference>
<dbReference type="GeneID" id="92747430"/>
<dbReference type="KEGG" id="aph:APH_0389"/>
<dbReference type="eggNOG" id="COG0696">
    <property type="taxonomic scope" value="Bacteria"/>
</dbReference>
<dbReference type="HOGENOM" id="CLU_026099_2_0_5"/>
<dbReference type="UniPathway" id="UPA00109">
    <property type="reaction ID" value="UER00186"/>
</dbReference>
<dbReference type="Proteomes" id="UP000001943">
    <property type="component" value="Chromosome"/>
</dbReference>
<dbReference type="GO" id="GO:0005829">
    <property type="term" value="C:cytosol"/>
    <property type="evidence" value="ECO:0007669"/>
    <property type="project" value="TreeGrafter"/>
</dbReference>
<dbReference type="GO" id="GO:0030145">
    <property type="term" value="F:manganese ion binding"/>
    <property type="evidence" value="ECO:0007669"/>
    <property type="project" value="UniProtKB-UniRule"/>
</dbReference>
<dbReference type="GO" id="GO:0004619">
    <property type="term" value="F:phosphoglycerate mutase activity"/>
    <property type="evidence" value="ECO:0007669"/>
    <property type="project" value="UniProtKB-EC"/>
</dbReference>
<dbReference type="GO" id="GO:0006007">
    <property type="term" value="P:glucose catabolic process"/>
    <property type="evidence" value="ECO:0007669"/>
    <property type="project" value="InterPro"/>
</dbReference>
<dbReference type="GO" id="GO:0006096">
    <property type="term" value="P:glycolytic process"/>
    <property type="evidence" value="ECO:0007669"/>
    <property type="project" value="UniProtKB-UniRule"/>
</dbReference>
<dbReference type="CDD" id="cd16010">
    <property type="entry name" value="iPGM"/>
    <property type="match status" value="1"/>
</dbReference>
<dbReference type="Gene3D" id="3.40.720.10">
    <property type="entry name" value="Alkaline Phosphatase, subunit A"/>
    <property type="match status" value="1"/>
</dbReference>
<dbReference type="Gene3D" id="3.40.1450.10">
    <property type="entry name" value="BPG-independent phosphoglycerate mutase, domain B"/>
    <property type="match status" value="1"/>
</dbReference>
<dbReference type="HAMAP" id="MF_01038">
    <property type="entry name" value="GpmI"/>
    <property type="match status" value="1"/>
</dbReference>
<dbReference type="InterPro" id="IPR017850">
    <property type="entry name" value="Alkaline_phosphatase_core_sf"/>
</dbReference>
<dbReference type="InterPro" id="IPR011258">
    <property type="entry name" value="BPG-indep_PGM_N"/>
</dbReference>
<dbReference type="InterPro" id="IPR006124">
    <property type="entry name" value="Metalloenzyme"/>
</dbReference>
<dbReference type="InterPro" id="IPR036646">
    <property type="entry name" value="PGAM_B_sf"/>
</dbReference>
<dbReference type="InterPro" id="IPR005995">
    <property type="entry name" value="Pgm_bpd_ind"/>
</dbReference>
<dbReference type="NCBIfam" id="TIGR01307">
    <property type="entry name" value="pgm_bpd_ind"/>
    <property type="match status" value="1"/>
</dbReference>
<dbReference type="PANTHER" id="PTHR31637">
    <property type="entry name" value="2,3-BISPHOSPHOGLYCERATE-INDEPENDENT PHOSPHOGLYCERATE MUTASE"/>
    <property type="match status" value="1"/>
</dbReference>
<dbReference type="PANTHER" id="PTHR31637:SF0">
    <property type="entry name" value="2,3-BISPHOSPHOGLYCERATE-INDEPENDENT PHOSPHOGLYCERATE MUTASE"/>
    <property type="match status" value="1"/>
</dbReference>
<dbReference type="Pfam" id="PF06415">
    <property type="entry name" value="iPGM_N"/>
    <property type="match status" value="1"/>
</dbReference>
<dbReference type="Pfam" id="PF01676">
    <property type="entry name" value="Metalloenzyme"/>
    <property type="match status" value="1"/>
</dbReference>
<dbReference type="PIRSF" id="PIRSF001492">
    <property type="entry name" value="IPGAM"/>
    <property type="match status" value="1"/>
</dbReference>
<dbReference type="SUPFAM" id="SSF64158">
    <property type="entry name" value="2,3-Bisphosphoglycerate-independent phosphoglycerate mutase, substrate-binding domain"/>
    <property type="match status" value="1"/>
</dbReference>
<dbReference type="SUPFAM" id="SSF53649">
    <property type="entry name" value="Alkaline phosphatase-like"/>
    <property type="match status" value="1"/>
</dbReference>
<sequence>MSGSNVVLCILDGWGNGSGGRYDAIHAAYTPFWDTAVSCCPMSSLSASGTDVGLPSGQVGNSEVGHISIGCGRIVLQDLLRINLEINEVHKNPKLLDFVRDIQAKGGVCHMIGLLSDGGVHSLQAHMETIIEVITGFGIKVFIHVILDGRDVPPRSAEKYIGMLNAKIEHLNAEIATVAGRYYAMDRDNRLDRTCKAYDAIAYATGPRSGSAMEALEKSYNSGVTDEFMVPTVIGDYDGMGAEDGVLFTNFRNDRVLQLLGMLLHRFPEVSNVLGMRQYSEKMRIASLFPPREIHRSLGEVISERGLKQLRIAETEKFAHVTFFFNGGREEPFTGEDRIIIPSPDVSTYDLKPEMSAVEITDSLVERINSQQYALTVVNYANADMVGHTGNMEAAKKAVTTVDSCLQRVFYAAVNAGAVMLITADHGNAEKMFDVQNDSPFTAHTSSMVPFVVCNADGDISLSDGRLCDVAPTVLDLMNIPQPSDMTGCSLITRNS</sequence>
<accession>Q2GKV7</accession>
<protein>
    <recommendedName>
        <fullName evidence="1">2,3-bisphosphoglycerate-independent phosphoglycerate mutase</fullName>
        <shortName evidence="1">BPG-independent PGAM</shortName>
        <shortName evidence="1">Phosphoglyceromutase</shortName>
        <shortName evidence="1">iPGM</shortName>
        <ecNumber evidence="1">5.4.2.12</ecNumber>
    </recommendedName>
</protein>
<name>GPMI_ANAPZ</name>
<organism>
    <name type="scientific">Anaplasma phagocytophilum (strain HZ)</name>
    <dbReference type="NCBI Taxonomy" id="212042"/>
    <lineage>
        <taxon>Bacteria</taxon>
        <taxon>Pseudomonadati</taxon>
        <taxon>Pseudomonadota</taxon>
        <taxon>Alphaproteobacteria</taxon>
        <taxon>Rickettsiales</taxon>
        <taxon>Anaplasmataceae</taxon>
        <taxon>Anaplasma</taxon>
        <taxon>phagocytophilum group</taxon>
    </lineage>
</organism>
<comment type="function">
    <text evidence="1">Catalyzes the interconversion of 2-phosphoglycerate and 3-phosphoglycerate.</text>
</comment>
<comment type="catalytic activity">
    <reaction evidence="1">
        <text>(2R)-2-phosphoglycerate = (2R)-3-phosphoglycerate</text>
        <dbReference type="Rhea" id="RHEA:15901"/>
        <dbReference type="ChEBI" id="CHEBI:58272"/>
        <dbReference type="ChEBI" id="CHEBI:58289"/>
        <dbReference type="EC" id="5.4.2.12"/>
    </reaction>
</comment>
<comment type="cofactor">
    <cofactor evidence="1">
        <name>Mn(2+)</name>
        <dbReference type="ChEBI" id="CHEBI:29035"/>
    </cofactor>
    <text evidence="1">Binds 2 manganese ions per subunit.</text>
</comment>
<comment type="pathway">
    <text evidence="1">Carbohydrate degradation; glycolysis; pyruvate from D-glyceraldehyde 3-phosphate: step 3/5.</text>
</comment>
<comment type="subunit">
    <text evidence="1">Monomer.</text>
</comment>
<comment type="similarity">
    <text evidence="1">Belongs to the BPG-independent phosphoglycerate mutase family.</text>
</comment>
<reference key="1">
    <citation type="journal article" date="2006" name="PLoS Genet.">
        <title>Comparative genomics of emerging human ehrlichiosis agents.</title>
        <authorList>
            <person name="Dunning Hotopp J.C."/>
            <person name="Lin M."/>
            <person name="Madupu R."/>
            <person name="Crabtree J."/>
            <person name="Angiuoli S.V."/>
            <person name="Eisen J.A."/>
            <person name="Seshadri R."/>
            <person name="Ren Q."/>
            <person name="Wu M."/>
            <person name="Utterback T.R."/>
            <person name="Smith S."/>
            <person name="Lewis M."/>
            <person name="Khouri H."/>
            <person name="Zhang C."/>
            <person name="Niu H."/>
            <person name="Lin Q."/>
            <person name="Ohashi N."/>
            <person name="Zhi N."/>
            <person name="Nelson W.C."/>
            <person name="Brinkac L.M."/>
            <person name="Dodson R.J."/>
            <person name="Rosovitz M.J."/>
            <person name="Sundaram J.P."/>
            <person name="Daugherty S.C."/>
            <person name="Davidsen T."/>
            <person name="Durkin A.S."/>
            <person name="Gwinn M.L."/>
            <person name="Haft D.H."/>
            <person name="Selengut J.D."/>
            <person name="Sullivan S.A."/>
            <person name="Zafar N."/>
            <person name="Zhou L."/>
            <person name="Benahmed F."/>
            <person name="Forberger H."/>
            <person name="Halpin R."/>
            <person name="Mulligan S."/>
            <person name="Robinson J."/>
            <person name="White O."/>
            <person name="Rikihisa Y."/>
            <person name="Tettelin H."/>
        </authorList>
    </citation>
    <scope>NUCLEOTIDE SEQUENCE [LARGE SCALE GENOMIC DNA]</scope>
    <source>
        <strain>HZ</strain>
    </source>
</reference>
<gene>
    <name evidence="1" type="primary">gpmI</name>
    <name type="ordered locus">APH_0389</name>
</gene>
<keyword id="KW-0324">Glycolysis</keyword>
<keyword id="KW-0413">Isomerase</keyword>
<keyword id="KW-0464">Manganese</keyword>
<keyword id="KW-0479">Metal-binding</keyword>
<proteinExistence type="inferred from homology"/>